<gene>
    <name type="primary">prgJ</name>
    <name type="ordered locus">STM2872</name>
</gene>
<organism>
    <name type="scientific">Salmonella typhimurium (strain LT2 / SGSC1412 / ATCC 700720)</name>
    <dbReference type="NCBI Taxonomy" id="99287"/>
    <lineage>
        <taxon>Bacteria</taxon>
        <taxon>Pseudomonadati</taxon>
        <taxon>Pseudomonadota</taxon>
        <taxon>Gammaproteobacteria</taxon>
        <taxon>Enterobacterales</taxon>
        <taxon>Enterobacteriaceae</taxon>
        <taxon>Salmonella</taxon>
    </lineage>
</organism>
<comment type="function">
    <text>Required for invasion of epithelial cells.</text>
</comment>
<comment type="similarity">
    <text evidence="1">To S.flexneri MxiI.</text>
</comment>
<sequence>MSIATIVPENAVIGQAVNIRSMETDIVSLDDRLLQAFSGSAIATAVDKQTITNRIEDPNLVTDPKELAISQEMISDYNLYVSMVSTLTRKGVGAVETLLRS</sequence>
<name>PRGJ_SALTY</name>
<reference key="1">
    <citation type="journal article" date="1995" name="Mol. Microbiol.">
        <title>PhoP/PhoQ transcriptional repression of Salmonella typhimurium invasion genes: evidence for a role in protein secretion.</title>
        <authorList>
            <person name="Pegues D.A."/>
            <person name="Hantman M.J."/>
            <person name="Behlau I."/>
            <person name="Miller S.I."/>
        </authorList>
    </citation>
    <scope>NUCLEOTIDE SEQUENCE [GENOMIC DNA]</scope>
    <source>
        <strain>ATCC 14028s / SGSG 2262</strain>
    </source>
</reference>
<reference key="2">
    <citation type="journal article" date="2001" name="Nature">
        <title>Complete genome sequence of Salmonella enterica serovar Typhimurium LT2.</title>
        <authorList>
            <person name="McClelland M."/>
            <person name="Sanderson K.E."/>
            <person name="Spieth J."/>
            <person name="Clifton S.W."/>
            <person name="Latreille P."/>
            <person name="Courtney L."/>
            <person name="Porwollik S."/>
            <person name="Ali J."/>
            <person name="Dante M."/>
            <person name="Du F."/>
            <person name="Hou S."/>
            <person name="Layman D."/>
            <person name="Leonard S."/>
            <person name="Nguyen C."/>
            <person name="Scott K."/>
            <person name="Holmes A."/>
            <person name="Grewal N."/>
            <person name="Mulvaney E."/>
            <person name="Ryan E."/>
            <person name="Sun H."/>
            <person name="Florea L."/>
            <person name="Miller W."/>
            <person name="Stoneking T."/>
            <person name="Nhan M."/>
            <person name="Waterston R."/>
            <person name="Wilson R.K."/>
        </authorList>
    </citation>
    <scope>NUCLEOTIDE SEQUENCE [LARGE SCALE GENOMIC DNA]</scope>
    <source>
        <strain>LT2 / SGSC1412 / ATCC 700720</strain>
    </source>
</reference>
<accession>P41785</accession>
<evidence type="ECO:0000305" key="1"/>
<feature type="chain" id="PRO_0000058573" description="Protein PrgJ">
    <location>
        <begin position="1"/>
        <end position="101"/>
    </location>
</feature>
<protein>
    <recommendedName>
        <fullName>Protein PrgJ</fullName>
    </recommendedName>
</protein>
<keyword id="KW-0002">3D-structure</keyword>
<keyword id="KW-0653">Protein transport</keyword>
<keyword id="KW-1185">Reference proteome</keyword>
<keyword id="KW-0813">Transport</keyword>
<keyword id="KW-0843">Virulence</keyword>
<proteinExistence type="evidence at protein level"/>
<dbReference type="EMBL" id="U21676">
    <property type="protein sequence ID" value="AAB60190.1"/>
    <property type="molecule type" value="Genomic_DNA"/>
</dbReference>
<dbReference type="EMBL" id="AE006468">
    <property type="protein sequence ID" value="AAL21752.1"/>
    <property type="molecule type" value="Genomic_DNA"/>
</dbReference>
<dbReference type="PIR" id="S69785">
    <property type="entry name" value="S69785"/>
</dbReference>
<dbReference type="RefSeq" id="NP_461793.1">
    <property type="nucleotide sequence ID" value="NC_003197.2"/>
</dbReference>
<dbReference type="RefSeq" id="WP_000020431.1">
    <property type="nucleotide sequence ID" value="NC_003197.2"/>
</dbReference>
<dbReference type="PDB" id="6PEP">
    <property type="method" value="EM"/>
    <property type="resolution" value="3.80 A"/>
    <property type="chains" value="AM/AN/AO/AP/AQ/AR=1-101"/>
</dbReference>
<dbReference type="PDB" id="6Q15">
    <property type="method" value="EM"/>
    <property type="resolution" value="5.15 A"/>
    <property type="chains" value="AM/AN/AO/AP/AQ/AR=1-101"/>
</dbReference>
<dbReference type="PDB" id="6Q16">
    <property type="method" value="EM"/>
    <property type="resolution" value="4.10 A"/>
    <property type="chains" value="AM/AN/AO/AP/AQ/AR=1-101"/>
</dbReference>
<dbReference type="PDB" id="7AGX">
    <property type="method" value="EM"/>
    <property type="resolution" value="3.60 A"/>
    <property type="chains" value="1K/1L/1M/1N/1O/1P=1-101"/>
</dbReference>
<dbReference type="PDB" id="7AH9">
    <property type="method" value="EM"/>
    <property type="resolution" value="3.30 A"/>
    <property type="chains" value="1K/1L/1M/1N/1O/1P=1-101"/>
</dbReference>
<dbReference type="PDB" id="7AHI">
    <property type="method" value="EM"/>
    <property type="resolution" value="3.30 A"/>
    <property type="chains" value="1K/1L/1M/1N/1O/1P=1-101"/>
</dbReference>
<dbReference type="PDBsum" id="6PEP"/>
<dbReference type="PDBsum" id="6Q15"/>
<dbReference type="PDBsum" id="6Q16"/>
<dbReference type="PDBsum" id="7AGX"/>
<dbReference type="PDBsum" id="7AH9"/>
<dbReference type="PDBsum" id="7AHI"/>
<dbReference type="EMDB" id="EMD-11780"/>
<dbReference type="EMDB" id="EMD-11781"/>
<dbReference type="EMDB" id="EMD-20556"/>
<dbReference type="SMR" id="P41785"/>
<dbReference type="DIP" id="DIP-59556N"/>
<dbReference type="IntAct" id="P41785">
    <property type="interactions" value="5"/>
</dbReference>
<dbReference type="STRING" id="99287.STM2872"/>
<dbReference type="TCDB" id="3.A.6.1.3">
    <property type="family name" value="the type iii (virulence-related) secretory pathway (iiisp) family"/>
</dbReference>
<dbReference type="PaxDb" id="99287-STM2872"/>
<dbReference type="GeneID" id="1254395"/>
<dbReference type="KEGG" id="stm:STM2872"/>
<dbReference type="PATRIC" id="fig|99287.12.peg.3028"/>
<dbReference type="HOGENOM" id="CLU_162047_0_0_6"/>
<dbReference type="OMA" id="NIRPMET"/>
<dbReference type="BioCyc" id="SENT99287:STM2872-MONOMER"/>
<dbReference type="Reactome" id="R-HSA-844623">
    <property type="pathway name" value="The IPAF inflammasome"/>
</dbReference>
<dbReference type="Proteomes" id="UP000001014">
    <property type="component" value="Chromosome"/>
</dbReference>
<dbReference type="GO" id="GO:0015031">
    <property type="term" value="P:protein transport"/>
    <property type="evidence" value="ECO:0007669"/>
    <property type="project" value="UniProtKB-KW"/>
</dbReference>
<dbReference type="InterPro" id="IPR047754">
    <property type="entry name" value="T3SS_SctI-like"/>
</dbReference>
<dbReference type="NCBIfam" id="NF011853">
    <property type="entry name" value="PRK15325.1"/>
    <property type="match status" value="1"/>
</dbReference>
<dbReference type="NCBIfam" id="NF038054">
    <property type="entry name" value="T3SS_SctI"/>
    <property type="match status" value="1"/>
</dbReference>